<gene>
    <name evidence="6" type="primary">UGP2</name>
    <name type="ordered locus">At3g03250</name>
    <name type="ORF">T17B22.6</name>
</gene>
<evidence type="ECO:0000250" key="1"/>
<evidence type="ECO:0000250" key="2">
    <source>
        <dbReference type="UniProtKB" id="Q16851"/>
    </source>
</evidence>
<evidence type="ECO:0000269" key="3">
    <source>
    </source>
</evidence>
<evidence type="ECO:0000269" key="4">
    <source>
    </source>
</evidence>
<evidence type="ECO:0000269" key="5">
    <source>
    </source>
</evidence>
<evidence type="ECO:0000303" key="6">
    <source>
    </source>
</evidence>
<evidence type="ECO:0000303" key="7">
    <source>
    </source>
</evidence>
<evidence type="ECO:0000305" key="8"/>
<evidence type="ECO:0007744" key="9">
    <source>
        <dbReference type="PDB" id="2ICX"/>
    </source>
</evidence>
<evidence type="ECO:0007744" key="10">
    <source>
    </source>
</evidence>
<evidence type="ECO:0007829" key="11">
    <source>
        <dbReference type="PDB" id="1Z90"/>
    </source>
</evidence>
<evidence type="ECO:0007829" key="12">
    <source>
        <dbReference type="PDB" id="2ICX"/>
    </source>
</evidence>
<evidence type="ECO:0007829" key="13">
    <source>
        <dbReference type="PDB" id="2ICY"/>
    </source>
</evidence>
<evidence type="ECO:0007829" key="14">
    <source>
        <dbReference type="PDB" id="2Q4J"/>
    </source>
</evidence>
<protein>
    <recommendedName>
        <fullName>UTP--glucose-1-phosphate uridylyltransferase 2</fullName>
        <ecNumber>2.7.7.9</ecNumber>
    </recommendedName>
    <alternativeName>
        <fullName>UDP-glucose pyrophosphorylase 2</fullName>
        <shortName evidence="7">AtUGP2</shortName>
        <shortName>UDPGP 2</shortName>
        <shortName>UGPase 2</shortName>
    </alternativeName>
</protein>
<dbReference type="EC" id="2.7.7.9"/>
<dbReference type="EMBL" id="AC012328">
    <property type="protein sequence ID" value="AAF26102.1"/>
    <property type="molecule type" value="Genomic_DNA"/>
</dbReference>
<dbReference type="EMBL" id="CP002686">
    <property type="protein sequence ID" value="AEE73917.1"/>
    <property type="molecule type" value="Genomic_DNA"/>
</dbReference>
<dbReference type="EMBL" id="AY035071">
    <property type="protein sequence ID" value="AAK59576.1"/>
    <property type="molecule type" value="mRNA"/>
</dbReference>
<dbReference type="EMBL" id="AY059148">
    <property type="protein sequence ID" value="AAL15254.1"/>
    <property type="molecule type" value="mRNA"/>
</dbReference>
<dbReference type="EMBL" id="AF361605">
    <property type="protein sequence ID" value="AAK32773.1"/>
    <property type="molecule type" value="mRNA"/>
</dbReference>
<dbReference type="RefSeq" id="NP_186975.1">
    <property type="nucleotide sequence ID" value="NM_111195.4"/>
</dbReference>
<dbReference type="PDB" id="1Z90">
    <property type="method" value="X-ray"/>
    <property type="resolution" value="1.86 A"/>
    <property type="chains" value="A/B=1-469"/>
</dbReference>
<dbReference type="PDB" id="2ICX">
    <property type="method" value="X-ray"/>
    <property type="resolution" value="1.85 A"/>
    <property type="chains" value="A/B=2-469"/>
</dbReference>
<dbReference type="PDB" id="2ICY">
    <property type="method" value="X-ray"/>
    <property type="resolution" value="1.64 A"/>
    <property type="chains" value="A/B=2-469"/>
</dbReference>
<dbReference type="PDB" id="2Q4J">
    <property type="method" value="X-ray"/>
    <property type="resolution" value="1.86 A"/>
    <property type="chains" value="A/B=1-469"/>
</dbReference>
<dbReference type="PDBsum" id="1Z90"/>
<dbReference type="PDBsum" id="2ICX"/>
<dbReference type="PDBsum" id="2ICY"/>
<dbReference type="PDBsum" id="2Q4J"/>
<dbReference type="SMR" id="Q9M9P3"/>
<dbReference type="BioGRID" id="6646">
    <property type="interactions" value="18"/>
</dbReference>
<dbReference type="FunCoup" id="Q9M9P3">
    <property type="interactions" value="3152"/>
</dbReference>
<dbReference type="STRING" id="3702.Q9M9P3"/>
<dbReference type="iPTMnet" id="Q9M9P3"/>
<dbReference type="MetOSite" id="Q9M9P3"/>
<dbReference type="PaxDb" id="3702-AT3G03250.1"/>
<dbReference type="ProteomicsDB" id="245266"/>
<dbReference type="DNASU" id="821313"/>
<dbReference type="EnsemblPlants" id="AT3G03250.1">
    <property type="protein sequence ID" value="AT3G03250.1"/>
    <property type="gene ID" value="AT3G03250"/>
</dbReference>
<dbReference type="GeneID" id="821313"/>
<dbReference type="Gramene" id="AT3G03250.1">
    <property type="protein sequence ID" value="AT3G03250.1"/>
    <property type="gene ID" value="AT3G03250"/>
</dbReference>
<dbReference type="KEGG" id="ath:AT3G03250"/>
<dbReference type="Araport" id="AT3G03250"/>
<dbReference type="TAIR" id="AT3G03250">
    <property type="gene designation" value="UGP1"/>
</dbReference>
<dbReference type="eggNOG" id="KOG2638">
    <property type="taxonomic scope" value="Eukaryota"/>
</dbReference>
<dbReference type="HOGENOM" id="CLU_023632_3_0_1"/>
<dbReference type="InParanoid" id="Q9M9P3"/>
<dbReference type="OrthoDB" id="932129at2759"/>
<dbReference type="PhylomeDB" id="Q9M9P3"/>
<dbReference type="BioCyc" id="ARA:AT3G03250-MONOMER"/>
<dbReference type="BioCyc" id="MetaCyc:AT3G03250-MONOMER"/>
<dbReference type="BRENDA" id="2.7.7.9">
    <property type="organism ID" value="399"/>
</dbReference>
<dbReference type="SABIO-RK" id="Q9M9P3"/>
<dbReference type="EvolutionaryTrace" id="Q9M9P3"/>
<dbReference type="PRO" id="PR:Q9M9P3"/>
<dbReference type="Proteomes" id="UP000006548">
    <property type="component" value="Chromosome 3"/>
</dbReference>
<dbReference type="ExpressionAtlas" id="Q9M9P3">
    <property type="expression patterns" value="baseline and differential"/>
</dbReference>
<dbReference type="GO" id="GO:0005829">
    <property type="term" value="C:cytosol"/>
    <property type="evidence" value="ECO:0007005"/>
    <property type="project" value="TAIR"/>
</dbReference>
<dbReference type="GO" id="GO:0005886">
    <property type="term" value="C:plasma membrane"/>
    <property type="evidence" value="ECO:0007005"/>
    <property type="project" value="TAIR"/>
</dbReference>
<dbReference type="GO" id="GO:0090406">
    <property type="term" value="C:pollen tube"/>
    <property type="evidence" value="ECO:0000314"/>
    <property type="project" value="TAIR"/>
</dbReference>
<dbReference type="GO" id="GO:0003983">
    <property type="term" value="F:UTP:glucose-1-phosphate uridylyltransferase activity"/>
    <property type="evidence" value="ECO:0007669"/>
    <property type="project" value="UniProtKB-EC"/>
</dbReference>
<dbReference type="GO" id="GO:0052543">
    <property type="term" value="P:callose deposition in cell wall"/>
    <property type="evidence" value="ECO:0000316"/>
    <property type="project" value="TAIR"/>
</dbReference>
<dbReference type="GO" id="GO:0016036">
    <property type="term" value="P:cellular response to phosphate starvation"/>
    <property type="evidence" value="ECO:0000270"/>
    <property type="project" value="TAIR"/>
</dbReference>
<dbReference type="GO" id="GO:0009555">
    <property type="term" value="P:pollen development"/>
    <property type="evidence" value="ECO:0000316"/>
    <property type="project" value="TAIR"/>
</dbReference>
<dbReference type="GO" id="GO:0005985">
    <property type="term" value="P:sucrose metabolic process"/>
    <property type="evidence" value="ECO:0000304"/>
    <property type="project" value="TAIR"/>
</dbReference>
<dbReference type="GO" id="GO:0006011">
    <property type="term" value="P:UDP-alpha-D-glucose metabolic process"/>
    <property type="evidence" value="ECO:0007669"/>
    <property type="project" value="InterPro"/>
</dbReference>
<dbReference type="CDD" id="cd00897">
    <property type="entry name" value="UGPase_euk"/>
    <property type="match status" value="1"/>
</dbReference>
<dbReference type="FunFam" id="2.160.10.10:FF:000001">
    <property type="entry name" value="UTP--glucose-1-phosphate uridylyltransferase"/>
    <property type="match status" value="1"/>
</dbReference>
<dbReference type="FunFam" id="3.90.550.10:FF:000073">
    <property type="entry name" value="UTP--glucose-1-phosphate uridylyltransferase"/>
    <property type="match status" value="1"/>
</dbReference>
<dbReference type="Gene3D" id="2.160.10.10">
    <property type="entry name" value="Hexapeptide repeat proteins"/>
    <property type="match status" value="1"/>
</dbReference>
<dbReference type="Gene3D" id="3.90.550.10">
    <property type="entry name" value="Spore Coat Polysaccharide Biosynthesis Protein SpsA, Chain A"/>
    <property type="match status" value="1"/>
</dbReference>
<dbReference type="InterPro" id="IPR029044">
    <property type="entry name" value="Nucleotide-diphossugar_trans"/>
</dbReference>
<dbReference type="InterPro" id="IPR002618">
    <property type="entry name" value="UDPGP_fam"/>
</dbReference>
<dbReference type="InterPro" id="IPR016267">
    <property type="entry name" value="UDPGP_trans"/>
</dbReference>
<dbReference type="PANTHER" id="PTHR43511">
    <property type="match status" value="1"/>
</dbReference>
<dbReference type="Pfam" id="PF01704">
    <property type="entry name" value="UDPGP"/>
    <property type="match status" value="1"/>
</dbReference>
<dbReference type="PIRSF" id="PIRSF000806">
    <property type="entry name" value="UDPGP"/>
    <property type="match status" value="1"/>
</dbReference>
<dbReference type="SUPFAM" id="SSF53448">
    <property type="entry name" value="Nucleotide-diphospho-sugar transferases"/>
    <property type="match status" value="1"/>
</dbReference>
<organism>
    <name type="scientific">Arabidopsis thaliana</name>
    <name type="common">Mouse-ear cress</name>
    <dbReference type="NCBI Taxonomy" id="3702"/>
    <lineage>
        <taxon>Eukaryota</taxon>
        <taxon>Viridiplantae</taxon>
        <taxon>Streptophyta</taxon>
        <taxon>Embryophyta</taxon>
        <taxon>Tracheophyta</taxon>
        <taxon>Spermatophyta</taxon>
        <taxon>Magnoliopsida</taxon>
        <taxon>eudicotyledons</taxon>
        <taxon>Gunneridae</taxon>
        <taxon>Pentapetalae</taxon>
        <taxon>rosids</taxon>
        <taxon>malvids</taxon>
        <taxon>Brassicales</taxon>
        <taxon>Brassicaceae</taxon>
        <taxon>Camelineae</taxon>
        <taxon>Arabidopsis</taxon>
    </lineage>
</organism>
<proteinExistence type="evidence at protein level"/>
<name>UGPA2_ARATH</name>
<reference key="1">
    <citation type="journal article" date="2000" name="Nature">
        <title>Sequence and analysis of chromosome 3 of the plant Arabidopsis thaliana.</title>
        <authorList>
            <person name="Salanoubat M."/>
            <person name="Lemcke K."/>
            <person name="Rieger M."/>
            <person name="Ansorge W."/>
            <person name="Unseld M."/>
            <person name="Fartmann B."/>
            <person name="Valle G."/>
            <person name="Bloecker H."/>
            <person name="Perez-Alonso M."/>
            <person name="Obermaier B."/>
            <person name="Delseny M."/>
            <person name="Boutry M."/>
            <person name="Grivell L.A."/>
            <person name="Mache R."/>
            <person name="Puigdomenech P."/>
            <person name="De Simone V."/>
            <person name="Choisne N."/>
            <person name="Artiguenave F."/>
            <person name="Robert C."/>
            <person name="Brottier P."/>
            <person name="Wincker P."/>
            <person name="Cattolico L."/>
            <person name="Weissenbach J."/>
            <person name="Saurin W."/>
            <person name="Quetier F."/>
            <person name="Schaefer M."/>
            <person name="Mueller-Auer S."/>
            <person name="Gabel C."/>
            <person name="Fuchs M."/>
            <person name="Benes V."/>
            <person name="Wurmbach E."/>
            <person name="Drzonek H."/>
            <person name="Erfle H."/>
            <person name="Jordan N."/>
            <person name="Bangert S."/>
            <person name="Wiedelmann R."/>
            <person name="Kranz H."/>
            <person name="Voss H."/>
            <person name="Holland R."/>
            <person name="Brandt P."/>
            <person name="Nyakatura G."/>
            <person name="Vezzi A."/>
            <person name="D'Angelo M."/>
            <person name="Pallavicini A."/>
            <person name="Toppo S."/>
            <person name="Simionati B."/>
            <person name="Conrad A."/>
            <person name="Hornischer K."/>
            <person name="Kauer G."/>
            <person name="Loehnert T.-H."/>
            <person name="Nordsiek G."/>
            <person name="Reichelt J."/>
            <person name="Scharfe M."/>
            <person name="Schoen O."/>
            <person name="Bargues M."/>
            <person name="Terol J."/>
            <person name="Climent J."/>
            <person name="Navarro P."/>
            <person name="Collado C."/>
            <person name="Perez-Perez A."/>
            <person name="Ottenwaelder B."/>
            <person name="Duchemin D."/>
            <person name="Cooke R."/>
            <person name="Laudie M."/>
            <person name="Berger-Llauro C."/>
            <person name="Purnelle B."/>
            <person name="Masuy D."/>
            <person name="de Haan M."/>
            <person name="Maarse A.C."/>
            <person name="Alcaraz J.-P."/>
            <person name="Cottet A."/>
            <person name="Casacuberta E."/>
            <person name="Monfort A."/>
            <person name="Argiriou A."/>
            <person name="Flores M."/>
            <person name="Liguori R."/>
            <person name="Vitale D."/>
            <person name="Mannhaupt G."/>
            <person name="Haase D."/>
            <person name="Schoof H."/>
            <person name="Rudd S."/>
            <person name="Zaccaria P."/>
            <person name="Mewes H.-W."/>
            <person name="Mayer K.F.X."/>
            <person name="Kaul S."/>
            <person name="Town C.D."/>
            <person name="Koo H.L."/>
            <person name="Tallon L.J."/>
            <person name="Jenkins J."/>
            <person name="Rooney T."/>
            <person name="Rizzo M."/>
            <person name="Walts A."/>
            <person name="Utterback T."/>
            <person name="Fujii C.Y."/>
            <person name="Shea T.P."/>
            <person name="Creasy T.H."/>
            <person name="Haas B."/>
            <person name="Maiti R."/>
            <person name="Wu D."/>
            <person name="Peterson J."/>
            <person name="Van Aken S."/>
            <person name="Pai G."/>
            <person name="Militscher J."/>
            <person name="Sellers P."/>
            <person name="Gill J.E."/>
            <person name="Feldblyum T.V."/>
            <person name="Preuss D."/>
            <person name="Lin X."/>
            <person name="Nierman W.C."/>
            <person name="Salzberg S.L."/>
            <person name="White O."/>
            <person name="Venter J.C."/>
            <person name="Fraser C.M."/>
            <person name="Kaneko T."/>
            <person name="Nakamura Y."/>
            <person name="Sato S."/>
            <person name="Kato T."/>
            <person name="Asamizu E."/>
            <person name="Sasamoto S."/>
            <person name="Kimura T."/>
            <person name="Idesawa K."/>
            <person name="Kawashima K."/>
            <person name="Kishida Y."/>
            <person name="Kiyokawa C."/>
            <person name="Kohara M."/>
            <person name="Matsumoto M."/>
            <person name="Matsuno A."/>
            <person name="Muraki A."/>
            <person name="Nakayama S."/>
            <person name="Nakazaki N."/>
            <person name="Shinpo S."/>
            <person name="Takeuchi C."/>
            <person name="Wada T."/>
            <person name="Watanabe A."/>
            <person name="Yamada M."/>
            <person name="Yasuda M."/>
            <person name="Tabata S."/>
        </authorList>
    </citation>
    <scope>NUCLEOTIDE SEQUENCE [LARGE SCALE GENOMIC DNA]</scope>
    <source>
        <strain>cv. Columbia</strain>
    </source>
</reference>
<reference key="2">
    <citation type="journal article" date="2017" name="Plant J.">
        <title>Araport11: a complete reannotation of the Arabidopsis thaliana reference genome.</title>
        <authorList>
            <person name="Cheng C.Y."/>
            <person name="Krishnakumar V."/>
            <person name="Chan A.P."/>
            <person name="Thibaud-Nissen F."/>
            <person name="Schobel S."/>
            <person name="Town C.D."/>
        </authorList>
    </citation>
    <scope>GENOME REANNOTATION</scope>
    <source>
        <strain>cv. Columbia</strain>
    </source>
</reference>
<reference key="3">
    <citation type="journal article" date="2003" name="Science">
        <title>Empirical analysis of transcriptional activity in the Arabidopsis genome.</title>
        <authorList>
            <person name="Yamada K."/>
            <person name="Lim J."/>
            <person name="Dale J.M."/>
            <person name="Chen H."/>
            <person name="Shinn P."/>
            <person name="Palm C.J."/>
            <person name="Southwick A.M."/>
            <person name="Wu H.C."/>
            <person name="Kim C.J."/>
            <person name="Nguyen M."/>
            <person name="Pham P.K."/>
            <person name="Cheuk R.F."/>
            <person name="Karlin-Newmann G."/>
            <person name="Liu S.X."/>
            <person name="Lam B."/>
            <person name="Sakano H."/>
            <person name="Wu T."/>
            <person name="Yu G."/>
            <person name="Miranda M."/>
            <person name="Quach H.L."/>
            <person name="Tripp M."/>
            <person name="Chang C.H."/>
            <person name="Lee J.M."/>
            <person name="Toriumi M.J."/>
            <person name="Chan M.M."/>
            <person name="Tang C.C."/>
            <person name="Onodera C.S."/>
            <person name="Deng J.M."/>
            <person name="Akiyama K."/>
            <person name="Ansari Y."/>
            <person name="Arakawa T."/>
            <person name="Banh J."/>
            <person name="Banno F."/>
            <person name="Bowser L."/>
            <person name="Brooks S.Y."/>
            <person name="Carninci P."/>
            <person name="Chao Q."/>
            <person name="Choy N."/>
            <person name="Enju A."/>
            <person name="Goldsmith A.D."/>
            <person name="Gurjal M."/>
            <person name="Hansen N.F."/>
            <person name="Hayashizaki Y."/>
            <person name="Johnson-Hopson C."/>
            <person name="Hsuan V.W."/>
            <person name="Iida K."/>
            <person name="Karnes M."/>
            <person name="Khan S."/>
            <person name="Koesema E."/>
            <person name="Ishida J."/>
            <person name="Jiang P.X."/>
            <person name="Jones T."/>
            <person name="Kawai J."/>
            <person name="Kamiya A."/>
            <person name="Meyers C."/>
            <person name="Nakajima M."/>
            <person name="Narusaka M."/>
            <person name="Seki M."/>
            <person name="Sakurai T."/>
            <person name="Satou M."/>
            <person name="Tamse R."/>
            <person name="Vaysberg M."/>
            <person name="Wallender E.K."/>
            <person name="Wong C."/>
            <person name="Yamamura Y."/>
            <person name="Yuan S."/>
            <person name="Shinozaki K."/>
            <person name="Davis R.W."/>
            <person name="Theologis A."/>
            <person name="Ecker J.R."/>
        </authorList>
    </citation>
    <scope>NUCLEOTIDE SEQUENCE [LARGE SCALE MRNA]</scope>
    <source>
        <strain>cv. Columbia</strain>
    </source>
</reference>
<reference key="4">
    <citation type="journal article" date="2007" name="Mol. Cell. Proteomics">
        <title>Multidimensional protein identification technology (MudPIT) analysis of ubiquitinated proteins in plants.</title>
        <authorList>
            <person name="Maor R."/>
            <person name="Jones A."/>
            <person name="Nuehse T.S."/>
            <person name="Studholme D.J."/>
            <person name="Peck S.C."/>
            <person name="Shirasu K."/>
        </authorList>
    </citation>
    <scope>IDENTIFICATION BY MASS SPECTROMETRY [LARGE SCALE ANALYSIS]</scope>
    <source>
        <strain>cv. Landsberg erecta</strain>
    </source>
</reference>
<reference key="5">
    <citation type="journal article" date="2009" name="Plant Cell Physiol.">
        <title>UDP-glucose pyrophosphorylase is not rate limiting, but is essential in Arabidopsis.</title>
        <authorList>
            <person name="Meng M."/>
            <person name="Geisler M."/>
            <person name="Johansson H."/>
            <person name="Harholt J."/>
            <person name="Scheller H.V."/>
            <person name="Mellerowicz E.J."/>
            <person name="Kleczkowski L.A."/>
        </authorList>
    </citation>
    <scope>FUNCTION</scope>
    <scope>TISSUE SPECIFICITY</scope>
    <scope>INDUCTION BY SUCROSE</scope>
    <scope>DISRUPTION PHENOTYPE</scope>
</reference>
<reference key="6">
    <citation type="journal article" date="2010" name="Plant Cell Physiol.">
        <title>UDP-glucose pyrophosphorylase is rate limiting in vegetative and reproductive phases in Arabidopsis thaliana.</title>
        <authorList>
            <person name="Park J.I."/>
            <person name="Ishimizu T."/>
            <person name="Suwabe K."/>
            <person name="Sudo K."/>
            <person name="Masuko H."/>
            <person name="Hakozaki H."/>
            <person name="Nou I.S."/>
            <person name="Suzuki G."/>
            <person name="Watanabe M."/>
        </authorList>
    </citation>
    <scope>FUNCTION</scope>
    <scope>DISRUPTION PHENOTYPE</scope>
</reference>
<reference key="7">
    <citation type="journal article" date="2012" name="Mol. Cell. Proteomics">
        <title>Comparative large-scale characterisation of plant vs. mammal proteins reveals similar and idiosyncratic N-alpha acetylation features.</title>
        <authorList>
            <person name="Bienvenut W.V."/>
            <person name="Sumpton D."/>
            <person name="Martinez A."/>
            <person name="Lilla S."/>
            <person name="Espagne C."/>
            <person name="Meinnel T."/>
            <person name="Giglione C."/>
        </authorList>
    </citation>
    <scope>ACETYLATION [LARGE SCALE ANALYSIS] AT ALA-2</scope>
    <scope>CLEAVAGE OF INITIATOR METHIONINE [LARGE SCALE ANALYSIS]</scope>
    <scope>IDENTIFICATION BY MASS SPECTROMETRY [LARGE SCALE ANALYSIS]</scope>
</reference>
<reference key="8">
    <citation type="journal article" date="2007" name="J. Mol. Biol.">
        <title>Structure and dynamics of UDP-glucose pyrophosphorylase from Arabidopsis thaliana with bound UDP-glucose and UTP.</title>
        <authorList>
            <person name="McCoy J.G."/>
            <person name="Bitto E."/>
            <person name="Bingman C.A."/>
            <person name="Wesenberg G.E."/>
            <person name="Bannen R.M."/>
            <person name="Kondrashov D.A."/>
            <person name="Phillips G.N. Jr."/>
        </authorList>
    </citation>
    <scope>X-RAY CRYSTALLOGRAPHY (1.64 ANGSTROMS) OF 2-469 IN COMPLEX WITH UTP</scope>
</reference>
<comment type="function">
    <text evidence="4 5">Converts glucose 1-phosphate to UDP-glucose, which is the major glycosyl donor for polysaccharides. Acts redundantly with UGP1 and is essential for the synthesis of sucrose, starch and cell wall, and callose deposition.</text>
</comment>
<comment type="catalytic activity">
    <reaction>
        <text>alpha-D-glucose 1-phosphate + UTP + H(+) = UDP-alpha-D-glucose + diphosphate</text>
        <dbReference type="Rhea" id="RHEA:19889"/>
        <dbReference type="ChEBI" id="CHEBI:15378"/>
        <dbReference type="ChEBI" id="CHEBI:33019"/>
        <dbReference type="ChEBI" id="CHEBI:46398"/>
        <dbReference type="ChEBI" id="CHEBI:58601"/>
        <dbReference type="ChEBI" id="CHEBI:58885"/>
        <dbReference type="EC" id="2.7.7.9"/>
    </reaction>
</comment>
<comment type="subcellular location">
    <subcellularLocation>
        <location evidence="1">Cytoplasm</location>
    </subcellularLocation>
</comment>
<comment type="tissue specificity">
    <text evidence="4">Expressed in cauline leaves, flowers and siliques.</text>
</comment>
<comment type="induction">
    <text evidence="4">By sucrose.</text>
</comment>
<comment type="disruption phenotype">
    <text evidence="4 5">Reduced number of seeds (PubMed:19366709). The double mutants upg1 and ugp2 display severe growth defects and male sterility due to the absence of callose deposition around microspores (PubMed:20435647).</text>
</comment>
<comment type="similarity">
    <text evidence="8">Belongs to the UDPGP type 1 family.</text>
</comment>
<feature type="initiator methionine" description="Removed" evidence="10">
    <location>
        <position position="1"/>
    </location>
</feature>
<feature type="chain" id="PRO_0000185757" description="UTP--glucose-1-phosphate uridylyltransferase 2">
    <location>
        <begin position="2"/>
        <end position="469"/>
    </location>
</feature>
<feature type="binding site" evidence="3 9">
    <location>
        <begin position="85"/>
        <end position="88"/>
    </location>
    <ligand>
        <name>UTP</name>
        <dbReference type="ChEBI" id="CHEBI:46398"/>
    </ligand>
</feature>
<feature type="binding site" evidence="2">
    <location>
        <begin position="87"/>
        <end position="88"/>
    </location>
    <ligand>
        <name>substrate</name>
    </ligand>
</feature>
<feature type="binding site" evidence="3 9">
    <location>
        <position position="99"/>
    </location>
    <ligand>
        <name>UTP</name>
        <dbReference type="ChEBI" id="CHEBI:46398"/>
    </ligand>
</feature>
<feature type="binding site" evidence="3 9">
    <location>
        <position position="162"/>
    </location>
    <ligand>
        <name>UTP</name>
        <dbReference type="ChEBI" id="CHEBI:46398"/>
    </ligand>
</feature>
<feature type="binding site" evidence="3 9">
    <location>
        <position position="191"/>
    </location>
    <ligand>
        <name>UTP</name>
        <dbReference type="ChEBI" id="CHEBI:46398"/>
    </ligand>
</feature>
<feature type="binding site" evidence="2">
    <location>
        <position position="192"/>
    </location>
    <ligand>
        <name>substrate</name>
    </ligand>
</feature>
<feature type="binding site" evidence="2">
    <location>
        <begin position="220"/>
        <end position="222"/>
    </location>
    <ligand>
        <name>substrate</name>
    </ligand>
</feature>
<feature type="binding site" evidence="3 9">
    <location>
        <position position="222"/>
    </location>
    <ligand>
        <name>UTP</name>
        <dbReference type="ChEBI" id="CHEBI:46398"/>
    </ligand>
</feature>
<feature type="binding site" evidence="3 9">
    <location>
        <position position="360"/>
    </location>
    <ligand>
        <name>UTP</name>
        <dbReference type="ChEBI" id="CHEBI:46398"/>
    </ligand>
</feature>
<feature type="modified residue" description="N-acetylalanine" evidence="10">
    <location>
        <position position="2"/>
    </location>
</feature>
<feature type="sequence conflict" description="In Ref. 3; AAK32773." evidence="8" ref="3">
    <original>W</original>
    <variation>R</variation>
    <location>
        <position position="187"/>
    </location>
</feature>
<feature type="helix" evidence="13">
    <location>
        <begin position="8"/>
        <end position="17"/>
    </location>
</feature>
<feature type="strand" evidence="14">
    <location>
        <begin position="19"/>
        <end position="21"/>
    </location>
</feature>
<feature type="helix" evidence="13">
    <location>
        <begin position="23"/>
        <end position="36"/>
    </location>
</feature>
<feature type="helix" evidence="13">
    <location>
        <begin position="46"/>
        <end position="48"/>
    </location>
</feature>
<feature type="turn" evidence="13">
    <location>
        <begin position="54"/>
        <end position="56"/>
    </location>
</feature>
<feature type="strand" evidence="13">
    <location>
        <begin position="57"/>
        <end position="59"/>
    </location>
</feature>
<feature type="helix" evidence="13">
    <location>
        <begin position="60"/>
        <end position="62"/>
    </location>
</feature>
<feature type="helix" evidence="13">
    <location>
        <begin position="70"/>
        <end position="77"/>
    </location>
</feature>
<feature type="strand" evidence="13">
    <location>
        <begin position="80"/>
        <end position="86"/>
    </location>
</feature>
<feature type="helix" evidence="13">
    <location>
        <begin position="91"/>
        <end position="93"/>
    </location>
</feature>
<feature type="strand" evidence="12">
    <location>
        <begin position="96"/>
        <end position="98"/>
    </location>
</feature>
<feature type="helix" evidence="13">
    <location>
        <begin position="99"/>
        <end position="101"/>
    </location>
</feature>
<feature type="strand" evidence="13">
    <location>
        <begin position="102"/>
        <end position="105"/>
    </location>
</feature>
<feature type="helix" evidence="13">
    <location>
        <begin position="110"/>
        <end position="125"/>
    </location>
</feature>
<feature type="strand" evidence="13">
    <location>
        <begin position="131"/>
        <end position="135"/>
    </location>
</feature>
<feature type="turn" evidence="13">
    <location>
        <begin position="137"/>
        <end position="139"/>
    </location>
</feature>
<feature type="helix" evidence="13">
    <location>
        <begin position="140"/>
        <end position="147"/>
    </location>
</feature>
<feature type="helix" evidence="13">
    <location>
        <begin position="148"/>
        <end position="150"/>
    </location>
</feature>
<feature type="strand" evidence="13">
    <location>
        <begin position="153"/>
        <end position="155"/>
    </location>
</feature>
<feature type="strand" evidence="13">
    <location>
        <begin position="157"/>
        <end position="161"/>
    </location>
</feature>
<feature type="turn" evidence="13">
    <location>
        <begin position="170"/>
        <end position="173"/>
    </location>
</feature>
<feature type="helix" evidence="13">
    <location>
        <begin position="176"/>
        <end position="179"/>
    </location>
</feature>
<feature type="helix" evidence="13">
    <location>
        <begin position="184"/>
        <end position="186"/>
    </location>
</feature>
<feature type="helix" evidence="13">
    <location>
        <begin position="192"/>
        <end position="194"/>
    </location>
</feature>
<feature type="helix" evidence="13">
    <location>
        <begin position="195"/>
        <end position="202"/>
    </location>
</feature>
<feature type="helix" evidence="13">
    <location>
        <begin position="204"/>
        <end position="209"/>
    </location>
</feature>
<feature type="strand" evidence="13">
    <location>
        <begin position="215"/>
        <end position="220"/>
    </location>
</feature>
<feature type="helix" evidence="13">
    <location>
        <begin position="230"/>
        <end position="239"/>
    </location>
</feature>
<feature type="strand" evidence="13">
    <location>
        <begin position="242"/>
        <end position="249"/>
    </location>
</feature>
<feature type="helix" evidence="11">
    <location>
        <begin position="252"/>
        <end position="254"/>
    </location>
</feature>
<feature type="strand" evidence="13">
    <location>
        <begin position="259"/>
        <end position="263"/>
    </location>
</feature>
<feature type="strand" evidence="13">
    <location>
        <begin position="266"/>
        <end position="270"/>
    </location>
</feature>
<feature type="helix" evidence="13">
    <location>
        <begin position="272"/>
        <end position="274"/>
    </location>
</feature>
<feature type="helix" evidence="13">
    <location>
        <begin position="277"/>
        <end position="279"/>
    </location>
</feature>
<feature type="helix" evidence="13">
    <location>
        <begin position="280"/>
        <end position="284"/>
    </location>
</feature>
<feature type="strand" evidence="13">
    <location>
        <begin position="285"/>
        <end position="288"/>
    </location>
</feature>
<feature type="strand" evidence="13">
    <location>
        <begin position="291"/>
        <end position="300"/>
    </location>
</feature>
<feature type="helix" evidence="13">
    <location>
        <begin position="301"/>
        <end position="309"/>
    </location>
</feature>
<feature type="strand" evidence="13">
    <location>
        <begin position="321"/>
        <end position="324"/>
    </location>
</feature>
<feature type="strand" evidence="13">
    <location>
        <begin position="327"/>
        <end position="330"/>
    </location>
</feature>
<feature type="helix" evidence="13">
    <location>
        <begin position="336"/>
        <end position="342"/>
    </location>
</feature>
<feature type="strand" evidence="13">
    <location>
        <begin position="347"/>
        <end position="350"/>
    </location>
</feature>
<feature type="helix" evidence="13">
    <location>
        <begin position="353"/>
        <end position="355"/>
    </location>
</feature>
<feature type="helix" evidence="13">
    <location>
        <begin position="362"/>
        <end position="369"/>
    </location>
</feature>
<feature type="strand" evidence="13">
    <location>
        <begin position="373"/>
        <end position="376"/>
    </location>
</feature>
<feature type="strand" evidence="13">
    <location>
        <begin position="379"/>
        <end position="382"/>
    </location>
</feature>
<feature type="strand" evidence="13">
    <location>
        <begin position="388"/>
        <end position="390"/>
    </location>
</feature>
<feature type="strand" evidence="13">
    <location>
        <begin position="393"/>
        <end position="396"/>
    </location>
</feature>
<feature type="helix" evidence="13">
    <location>
        <begin position="398"/>
        <end position="400"/>
    </location>
</feature>
<feature type="helix" evidence="13">
    <location>
        <begin position="403"/>
        <end position="408"/>
    </location>
</feature>
<feature type="strand" evidence="13">
    <location>
        <begin position="410"/>
        <end position="412"/>
    </location>
</feature>
<feature type="strand" evidence="13">
    <location>
        <begin position="419"/>
        <end position="430"/>
    </location>
</feature>
<feature type="strand" evidence="13">
    <location>
        <begin position="435"/>
        <end position="443"/>
    </location>
</feature>
<feature type="strand" evidence="13">
    <location>
        <begin position="449"/>
        <end position="452"/>
    </location>
</feature>
<feature type="strand" evidence="13">
    <location>
        <begin position="457"/>
        <end position="460"/>
    </location>
</feature>
<feature type="helix" evidence="12">
    <location>
        <begin position="466"/>
        <end position="468"/>
    </location>
</feature>
<keyword id="KW-0002">3D-structure</keyword>
<keyword id="KW-0007">Acetylation</keyword>
<keyword id="KW-0963">Cytoplasm</keyword>
<keyword id="KW-0548">Nucleotidyltransferase</keyword>
<keyword id="KW-1185">Reference proteome</keyword>
<keyword id="KW-0808">Transferase</keyword>
<accession>Q9M9P3</accession>
<accession>Q9ASY1</accession>
<sequence length="469" mass="51738">MAATTENLPQLKSAVDGLTEMSESEKSGFISLVSRYLSGEAQHIEWSKIQTPTDEIVVPYEKMTPVSQDVAETKNLLDKLVVLKLNGGLGTTMGCTGPKSVIEVRDGLTFLDLIVIQIENLNNKYGCKVPLVLMNSFNTHDDTHKIVEKYTNSNVDIHTFNQSKYPRVVADEFVPWPSKGKTDKEGWYPPGHGDVFPALMNSGKLDTFLSQGKEYVFVANSDNLGAIVDLTILKHLIQNKNEYCMEVTPKTLADVKGGTLISYEGKVQLLEIAQVPDEHVNEFKSIEKFKIFNTNNLWVNLKAIKKLVEADALKMEIIPNPKEVDGVKVLQLETAAGAAIRFFDNAIGVNVPRSRFLPVKASSDLLLVQSDLYTLVDGFVTRNKARTNPSNPSIELGPEFKKVATFLSRFKSIPSIVELDSLKVSGDVWFGSSIVLKGKVTVAAKSGVKLEIPDRAVVENKNINGPEDL</sequence>